<proteinExistence type="inferred from homology"/>
<accession>P60246</accession>
<feature type="chain" id="PRO_0000126308" description="Large ribosomal subunit protein bL36c">
    <location>
        <begin position="1"/>
        <end position="37"/>
    </location>
</feature>
<reference key="1">
    <citation type="journal article" date="2003" name="Mol. Biol. Evol.">
        <title>Analysis of the Amborella trichopoda chloroplast genome sequence suggests that Amborella is not a basal angiosperm.</title>
        <authorList>
            <person name="Goremykin V.V."/>
            <person name="Hirsch-Ernst K.I."/>
            <person name="Wolfl S."/>
            <person name="Hellwig F.H."/>
        </authorList>
    </citation>
    <scope>NUCLEOTIDE SEQUENCE [LARGE SCALE GENOMIC DNA]</scope>
</reference>
<sequence>MKIRASVRKICEKCRLIRRRGRIIVICSNPRHKQRQG</sequence>
<comment type="subcellular location">
    <subcellularLocation>
        <location>Plastid</location>
        <location>Chloroplast</location>
    </subcellularLocation>
</comment>
<comment type="similarity">
    <text evidence="1">Belongs to the bacterial ribosomal protein bL36 family.</text>
</comment>
<dbReference type="EMBL" id="AJ506156">
    <property type="protein sequence ID" value="CAD45140.1"/>
    <property type="molecule type" value="Genomic_DNA"/>
</dbReference>
<dbReference type="RefSeq" id="NP_904132.1">
    <property type="nucleotide sequence ID" value="NC_005086.1"/>
</dbReference>
<dbReference type="SMR" id="P60246"/>
<dbReference type="STRING" id="13333.P60246"/>
<dbReference type="GeneID" id="2546585"/>
<dbReference type="KEGG" id="atr:2546585"/>
<dbReference type="Proteomes" id="UP000017836">
    <property type="component" value="Chloroplast"/>
</dbReference>
<dbReference type="GO" id="GO:0009507">
    <property type="term" value="C:chloroplast"/>
    <property type="evidence" value="ECO:0007669"/>
    <property type="project" value="UniProtKB-SubCell"/>
</dbReference>
<dbReference type="GO" id="GO:1990904">
    <property type="term" value="C:ribonucleoprotein complex"/>
    <property type="evidence" value="ECO:0007669"/>
    <property type="project" value="UniProtKB-KW"/>
</dbReference>
<dbReference type="GO" id="GO:0005840">
    <property type="term" value="C:ribosome"/>
    <property type="evidence" value="ECO:0007669"/>
    <property type="project" value="UniProtKB-KW"/>
</dbReference>
<dbReference type="GO" id="GO:0003735">
    <property type="term" value="F:structural constituent of ribosome"/>
    <property type="evidence" value="ECO:0007669"/>
    <property type="project" value="InterPro"/>
</dbReference>
<dbReference type="GO" id="GO:0006412">
    <property type="term" value="P:translation"/>
    <property type="evidence" value="ECO:0007669"/>
    <property type="project" value="UniProtKB-UniRule"/>
</dbReference>
<dbReference type="HAMAP" id="MF_00251">
    <property type="entry name" value="Ribosomal_bL36"/>
    <property type="match status" value="1"/>
</dbReference>
<dbReference type="InterPro" id="IPR000473">
    <property type="entry name" value="Ribosomal_bL36"/>
</dbReference>
<dbReference type="InterPro" id="IPR035977">
    <property type="entry name" value="Ribosomal_bL36_sp"/>
</dbReference>
<dbReference type="NCBIfam" id="TIGR01022">
    <property type="entry name" value="rpmJ_bact"/>
    <property type="match status" value="1"/>
</dbReference>
<dbReference type="PANTHER" id="PTHR42888">
    <property type="entry name" value="50S RIBOSOMAL PROTEIN L36, CHLOROPLASTIC"/>
    <property type="match status" value="1"/>
</dbReference>
<dbReference type="PANTHER" id="PTHR42888:SF1">
    <property type="entry name" value="LARGE RIBOSOMAL SUBUNIT PROTEIN BL36C"/>
    <property type="match status" value="1"/>
</dbReference>
<dbReference type="Pfam" id="PF00444">
    <property type="entry name" value="Ribosomal_L36"/>
    <property type="match status" value="1"/>
</dbReference>
<dbReference type="SUPFAM" id="SSF57840">
    <property type="entry name" value="Ribosomal protein L36"/>
    <property type="match status" value="1"/>
</dbReference>
<dbReference type="PROSITE" id="PS00828">
    <property type="entry name" value="RIBOSOMAL_L36"/>
    <property type="match status" value="1"/>
</dbReference>
<name>RK36_AMBTC</name>
<evidence type="ECO:0000305" key="1"/>
<protein>
    <recommendedName>
        <fullName evidence="1">Large ribosomal subunit protein bL36c</fullName>
    </recommendedName>
    <alternativeName>
        <fullName>50S ribosomal protein L36, chloroplastic</fullName>
    </alternativeName>
</protein>
<gene>
    <name type="primary">rpl36</name>
</gene>
<organism>
    <name type="scientific">Amborella trichopoda</name>
    <dbReference type="NCBI Taxonomy" id="13333"/>
    <lineage>
        <taxon>Eukaryota</taxon>
        <taxon>Viridiplantae</taxon>
        <taxon>Streptophyta</taxon>
        <taxon>Embryophyta</taxon>
        <taxon>Tracheophyta</taxon>
        <taxon>Spermatophyta</taxon>
        <taxon>Magnoliopsida</taxon>
        <taxon>Amborellales</taxon>
        <taxon>Amborellaceae</taxon>
        <taxon>Amborella</taxon>
    </lineage>
</organism>
<keyword id="KW-0150">Chloroplast</keyword>
<keyword id="KW-0934">Plastid</keyword>
<keyword id="KW-1185">Reference proteome</keyword>
<keyword id="KW-0687">Ribonucleoprotein</keyword>
<keyword id="KW-0689">Ribosomal protein</keyword>
<geneLocation type="chloroplast"/>